<sequence>MLVYLAEYLTRFHTGFNVFSYVTFRAILGLLTALVFSLWFGPKLIERLQLLQIGQVVRNDGPESHFSKRGTPTMGGLLILAAIFISVLLWGDLGSRYVWVMLFVLGSFGLIGFIDDYRKVVRKDTKGLIARWKYILQSLAALLIAFFLYATAANPGETQLVVPFFKDVMPQLGAVFIVLAYFTIVGSSNAVNLTDGLDGLAIMPTVMVAAAFALIAYLSGHAQFANYLHIPHLPGSGELVIVCTAIVGAGLGFLWFNTYPAQVFMGDVGSLSLGAALGTIAVLVRQEILLVIMGGVFVMETLSVILQVGSYKLRGQRIFRMAPIHHHYELKGWPEPRVIVRFWIISIFLVLLGLATLKLR</sequence>
<organism>
    <name type="scientific">Shewanella baltica (strain OS223)</name>
    <dbReference type="NCBI Taxonomy" id="407976"/>
    <lineage>
        <taxon>Bacteria</taxon>
        <taxon>Pseudomonadati</taxon>
        <taxon>Pseudomonadota</taxon>
        <taxon>Gammaproteobacteria</taxon>
        <taxon>Alteromonadales</taxon>
        <taxon>Shewanellaceae</taxon>
        <taxon>Shewanella</taxon>
    </lineage>
</organism>
<keyword id="KW-0131">Cell cycle</keyword>
<keyword id="KW-0132">Cell division</keyword>
<keyword id="KW-0997">Cell inner membrane</keyword>
<keyword id="KW-1003">Cell membrane</keyword>
<keyword id="KW-0133">Cell shape</keyword>
<keyword id="KW-0961">Cell wall biogenesis/degradation</keyword>
<keyword id="KW-0460">Magnesium</keyword>
<keyword id="KW-0472">Membrane</keyword>
<keyword id="KW-0479">Metal-binding</keyword>
<keyword id="KW-0573">Peptidoglycan synthesis</keyword>
<keyword id="KW-0808">Transferase</keyword>
<keyword id="KW-0812">Transmembrane</keyword>
<keyword id="KW-1133">Transmembrane helix</keyword>
<comment type="function">
    <text evidence="1">Catalyzes the initial step of the lipid cycle reactions in the biosynthesis of the cell wall peptidoglycan: transfers peptidoglycan precursor phospho-MurNAc-pentapeptide from UDP-MurNAc-pentapeptide onto the lipid carrier undecaprenyl phosphate, yielding undecaprenyl-pyrophosphoryl-MurNAc-pentapeptide, known as lipid I.</text>
</comment>
<comment type="catalytic activity">
    <reaction evidence="1">
        <text>UDP-N-acetyl-alpha-D-muramoyl-L-alanyl-gamma-D-glutamyl-meso-2,6-diaminopimeloyl-D-alanyl-D-alanine + di-trans,octa-cis-undecaprenyl phosphate = di-trans,octa-cis-undecaprenyl diphospho-N-acetyl-alpha-D-muramoyl-L-alanyl-D-glutamyl-meso-2,6-diaminopimeloyl-D-alanyl-D-alanine + UMP</text>
        <dbReference type="Rhea" id="RHEA:28386"/>
        <dbReference type="ChEBI" id="CHEBI:57865"/>
        <dbReference type="ChEBI" id="CHEBI:60392"/>
        <dbReference type="ChEBI" id="CHEBI:61386"/>
        <dbReference type="ChEBI" id="CHEBI:61387"/>
        <dbReference type="EC" id="2.7.8.13"/>
    </reaction>
</comment>
<comment type="cofactor">
    <cofactor evidence="1">
        <name>Mg(2+)</name>
        <dbReference type="ChEBI" id="CHEBI:18420"/>
    </cofactor>
</comment>
<comment type="pathway">
    <text evidence="1">Cell wall biogenesis; peptidoglycan biosynthesis.</text>
</comment>
<comment type="subcellular location">
    <subcellularLocation>
        <location evidence="1">Cell inner membrane</location>
        <topology evidence="1">Multi-pass membrane protein</topology>
    </subcellularLocation>
</comment>
<comment type="similarity">
    <text evidence="1">Belongs to the glycosyltransferase 4 family. MraY subfamily.</text>
</comment>
<gene>
    <name evidence="1" type="primary">mraY</name>
    <name type="ordered locus">Sbal223_0424</name>
</gene>
<evidence type="ECO:0000255" key="1">
    <source>
        <dbReference type="HAMAP-Rule" id="MF_00038"/>
    </source>
</evidence>
<proteinExistence type="inferred from homology"/>
<protein>
    <recommendedName>
        <fullName evidence="1">Phospho-N-acetylmuramoyl-pentapeptide-transferase</fullName>
        <ecNumber evidence="1">2.7.8.13</ecNumber>
    </recommendedName>
    <alternativeName>
        <fullName evidence="1">UDP-MurNAc-pentapeptide phosphotransferase</fullName>
    </alternativeName>
</protein>
<name>MRAY_SHEB2</name>
<reference key="1">
    <citation type="submission" date="2008-12" db="EMBL/GenBank/DDBJ databases">
        <title>Complete sequence of chromosome of Shewanella baltica OS223.</title>
        <authorList>
            <consortium name="US DOE Joint Genome Institute"/>
            <person name="Lucas S."/>
            <person name="Copeland A."/>
            <person name="Lapidus A."/>
            <person name="Glavina del Rio T."/>
            <person name="Dalin E."/>
            <person name="Tice H."/>
            <person name="Bruce D."/>
            <person name="Goodwin L."/>
            <person name="Pitluck S."/>
            <person name="Chertkov O."/>
            <person name="Meincke L."/>
            <person name="Brettin T."/>
            <person name="Detter J.C."/>
            <person name="Han C."/>
            <person name="Kuske C.R."/>
            <person name="Larimer F."/>
            <person name="Land M."/>
            <person name="Hauser L."/>
            <person name="Kyrpides N."/>
            <person name="Ovchinnikova G."/>
            <person name="Brettar I."/>
            <person name="Rodrigues J."/>
            <person name="Konstantinidis K."/>
            <person name="Tiedje J."/>
        </authorList>
    </citation>
    <scope>NUCLEOTIDE SEQUENCE [LARGE SCALE GENOMIC DNA]</scope>
    <source>
        <strain>OS223</strain>
    </source>
</reference>
<accession>B8E695</accession>
<feature type="chain" id="PRO_1000117195" description="Phospho-N-acetylmuramoyl-pentapeptide-transferase">
    <location>
        <begin position="1"/>
        <end position="360"/>
    </location>
</feature>
<feature type="transmembrane region" description="Helical" evidence="1">
    <location>
        <begin position="26"/>
        <end position="46"/>
    </location>
</feature>
<feature type="transmembrane region" description="Helical" evidence="1">
    <location>
        <begin position="74"/>
        <end position="94"/>
    </location>
</feature>
<feature type="transmembrane region" description="Helical" evidence="1">
    <location>
        <begin position="97"/>
        <end position="117"/>
    </location>
</feature>
<feature type="transmembrane region" description="Helical" evidence="1">
    <location>
        <begin position="134"/>
        <end position="154"/>
    </location>
</feature>
<feature type="transmembrane region" description="Helical" evidence="1">
    <location>
        <begin position="168"/>
        <end position="188"/>
    </location>
</feature>
<feature type="transmembrane region" description="Helical" evidence="1">
    <location>
        <begin position="199"/>
        <end position="219"/>
    </location>
</feature>
<feature type="transmembrane region" description="Helical" evidence="1">
    <location>
        <begin position="236"/>
        <end position="256"/>
    </location>
</feature>
<feature type="transmembrane region" description="Helical" evidence="1">
    <location>
        <begin position="263"/>
        <end position="283"/>
    </location>
</feature>
<feature type="transmembrane region" description="Helical" evidence="1">
    <location>
        <begin position="288"/>
        <end position="308"/>
    </location>
</feature>
<feature type="transmembrane region" description="Helical" evidence="1">
    <location>
        <begin position="338"/>
        <end position="358"/>
    </location>
</feature>
<dbReference type="EC" id="2.7.8.13" evidence="1"/>
<dbReference type="EMBL" id="CP001252">
    <property type="protein sequence ID" value="ACK44958.1"/>
    <property type="molecule type" value="Genomic_DNA"/>
</dbReference>
<dbReference type="RefSeq" id="WP_006079891.1">
    <property type="nucleotide sequence ID" value="NC_011663.1"/>
</dbReference>
<dbReference type="SMR" id="B8E695"/>
<dbReference type="GeneID" id="11770748"/>
<dbReference type="KEGG" id="sbp:Sbal223_0424"/>
<dbReference type="HOGENOM" id="CLU_023982_0_0_6"/>
<dbReference type="UniPathway" id="UPA00219"/>
<dbReference type="Proteomes" id="UP000002507">
    <property type="component" value="Chromosome"/>
</dbReference>
<dbReference type="GO" id="GO:0005886">
    <property type="term" value="C:plasma membrane"/>
    <property type="evidence" value="ECO:0007669"/>
    <property type="project" value="UniProtKB-SubCell"/>
</dbReference>
<dbReference type="GO" id="GO:0046872">
    <property type="term" value="F:metal ion binding"/>
    <property type="evidence" value="ECO:0007669"/>
    <property type="project" value="UniProtKB-KW"/>
</dbReference>
<dbReference type="GO" id="GO:0008963">
    <property type="term" value="F:phospho-N-acetylmuramoyl-pentapeptide-transferase activity"/>
    <property type="evidence" value="ECO:0007669"/>
    <property type="project" value="UniProtKB-UniRule"/>
</dbReference>
<dbReference type="GO" id="GO:0051992">
    <property type="term" value="F:UDP-N-acetylmuramoyl-L-alanyl-D-glutamyl-meso-2,6-diaminopimelyl-D-alanyl-D-alanine:undecaprenyl-phosphate transferase activity"/>
    <property type="evidence" value="ECO:0007669"/>
    <property type="project" value="RHEA"/>
</dbReference>
<dbReference type="GO" id="GO:0051301">
    <property type="term" value="P:cell division"/>
    <property type="evidence" value="ECO:0007669"/>
    <property type="project" value="UniProtKB-KW"/>
</dbReference>
<dbReference type="GO" id="GO:0071555">
    <property type="term" value="P:cell wall organization"/>
    <property type="evidence" value="ECO:0007669"/>
    <property type="project" value="UniProtKB-KW"/>
</dbReference>
<dbReference type="GO" id="GO:0009252">
    <property type="term" value="P:peptidoglycan biosynthetic process"/>
    <property type="evidence" value="ECO:0007669"/>
    <property type="project" value="UniProtKB-UniRule"/>
</dbReference>
<dbReference type="GO" id="GO:0008360">
    <property type="term" value="P:regulation of cell shape"/>
    <property type="evidence" value="ECO:0007669"/>
    <property type="project" value="UniProtKB-KW"/>
</dbReference>
<dbReference type="CDD" id="cd06852">
    <property type="entry name" value="GT_MraY"/>
    <property type="match status" value="1"/>
</dbReference>
<dbReference type="HAMAP" id="MF_00038">
    <property type="entry name" value="MraY"/>
    <property type="match status" value="1"/>
</dbReference>
<dbReference type="InterPro" id="IPR000715">
    <property type="entry name" value="Glycosyl_transferase_4"/>
</dbReference>
<dbReference type="InterPro" id="IPR003524">
    <property type="entry name" value="PNAcMuramoyl-5peptid_Trfase"/>
</dbReference>
<dbReference type="InterPro" id="IPR018480">
    <property type="entry name" value="PNAcMuramoyl-5peptid_Trfase_CS"/>
</dbReference>
<dbReference type="NCBIfam" id="TIGR00445">
    <property type="entry name" value="mraY"/>
    <property type="match status" value="1"/>
</dbReference>
<dbReference type="PANTHER" id="PTHR22926">
    <property type="entry name" value="PHOSPHO-N-ACETYLMURAMOYL-PENTAPEPTIDE-TRANSFERASE"/>
    <property type="match status" value="1"/>
</dbReference>
<dbReference type="PANTHER" id="PTHR22926:SF5">
    <property type="entry name" value="PHOSPHO-N-ACETYLMURAMOYL-PENTAPEPTIDE-TRANSFERASE HOMOLOG"/>
    <property type="match status" value="1"/>
</dbReference>
<dbReference type="Pfam" id="PF00953">
    <property type="entry name" value="Glycos_transf_4"/>
    <property type="match status" value="1"/>
</dbReference>
<dbReference type="Pfam" id="PF10555">
    <property type="entry name" value="MraY_sig1"/>
    <property type="match status" value="1"/>
</dbReference>
<dbReference type="PROSITE" id="PS01347">
    <property type="entry name" value="MRAY_1"/>
    <property type="match status" value="1"/>
</dbReference>
<dbReference type="PROSITE" id="PS01348">
    <property type="entry name" value="MRAY_2"/>
    <property type="match status" value="1"/>
</dbReference>